<keyword id="KW-0067">ATP-binding</keyword>
<keyword id="KW-0460">Magnesium</keyword>
<keyword id="KW-0479">Metal-binding</keyword>
<keyword id="KW-0547">Nucleotide-binding</keyword>
<keyword id="KW-0548">Nucleotidyltransferase</keyword>
<keyword id="KW-0692">RNA repair</keyword>
<keyword id="KW-0694">RNA-binding</keyword>
<keyword id="KW-0808">Transferase</keyword>
<keyword id="KW-0819">tRNA processing</keyword>
<protein>
    <recommendedName>
        <fullName evidence="1">CCA-adding enzyme</fullName>
        <ecNumber evidence="1">2.7.7.72</ecNumber>
    </recommendedName>
    <alternativeName>
        <fullName evidence="1">CCA tRNA nucleotidyltransferase</fullName>
    </alternativeName>
    <alternativeName>
        <fullName evidence="1">tRNA CCA-pyrophosphorylase</fullName>
    </alternativeName>
    <alternativeName>
        <fullName evidence="1">tRNA adenylyl-/cytidylyl- transferase</fullName>
    </alternativeName>
    <alternativeName>
        <fullName evidence="1">tRNA nucleotidyltransferase</fullName>
    </alternativeName>
    <alternativeName>
        <fullName evidence="1">tRNA-NT</fullName>
    </alternativeName>
</protein>
<proteinExistence type="inferred from homology"/>
<sequence>MERFKKASSIIETLKQQGHEAYFVGGSVRDLIIDRPIGDIDIATSALPEEVMAIFPRHVPVGLEHGTVIVVENGEPYEVTTFRTESEYEDFRRPSSVQFVRSLEEDLKRRDFTMNAIAMTEEGKMVDLFAGQEAIQKREIMTVGNAADRFQEDALRMMRGIRFVSTLGFSLETKTKQAIETYGHLLEHIAIERITVEFEKLLTGTYCVKALKELVETKLFSHLPYLQMSEEKLLKATQYKWDSFEADIEAWAFFLYCIGEEHPAVFLRQWKFSNKKIKDIVAVLLTIRKRKEKDWDTVLLYKTGIHIAEMAERVYEAMIESYDHTAVNRVQTLFQALPIKNRQEMNVTGNDLLNWASKKPGPWVAEMIQKIEEAIVQGNVVNEKECIREWLQECNLL</sequence>
<evidence type="ECO:0000255" key="1">
    <source>
        <dbReference type="HAMAP-Rule" id="MF_01263"/>
    </source>
</evidence>
<organism>
    <name type="scientific">Bacillus cereus (strain Q1)</name>
    <dbReference type="NCBI Taxonomy" id="361100"/>
    <lineage>
        <taxon>Bacteria</taxon>
        <taxon>Bacillati</taxon>
        <taxon>Bacillota</taxon>
        <taxon>Bacilli</taxon>
        <taxon>Bacillales</taxon>
        <taxon>Bacillaceae</taxon>
        <taxon>Bacillus</taxon>
        <taxon>Bacillus cereus group</taxon>
    </lineage>
</organism>
<comment type="function">
    <text evidence="1">Catalyzes the addition and repair of the essential 3'-terminal CCA sequence in tRNAs without using a nucleic acid template. Adds these three nucleotides in the order of C, C, and A to the tRNA nucleotide-73, using CTP and ATP as substrates and producing inorganic pyrophosphate. tRNA 3'-terminal CCA addition is required both for tRNA processing and repair. Also involved in tRNA surveillance by mediating tandem CCA addition to generate a CCACCA at the 3' terminus of unstable tRNAs. While stable tRNAs receive only 3'-terminal CCA, unstable tRNAs are marked with CCACCA and rapidly degraded.</text>
</comment>
<comment type="catalytic activity">
    <reaction evidence="1">
        <text>a tRNA precursor + 2 CTP + ATP = a tRNA with a 3' CCA end + 3 diphosphate</text>
        <dbReference type="Rhea" id="RHEA:14433"/>
        <dbReference type="Rhea" id="RHEA-COMP:10465"/>
        <dbReference type="Rhea" id="RHEA-COMP:10468"/>
        <dbReference type="ChEBI" id="CHEBI:30616"/>
        <dbReference type="ChEBI" id="CHEBI:33019"/>
        <dbReference type="ChEBI" id="CHEBI:37563"/>
        <dbReference type="ChEBI" id="CHEBI:74896"/>
        <dbReference type="ChEBI" id="CHEBI:83071"/>
        <dbReference type="EC" id="2.7.7.72"/>
    </reaction>
</comment>
<comment type="catalytic activity">
    <reaction evidence="1">
        <text>a tRNA with a 3' CCA end + 2 CTP + ATP = a tRNA with a 3' CCACCA end + 3 diphosphate</text>
        <dbReference type="Rhea" id="RHEA:76235"/>
        <dbReference type="Rhea" id="RHEA-COMP:10468"/>
        <dbReference type="Rhea" id="RHEA-COMP:18655"/>
        <dbReference type="ChEBI" id="CHEBI:30616"/>
        <dbReference type="ChEBI" id="CHEBI:33019"/>
        <dbReference type="ChEBI" id="CHEBI:37563"/>
        <dbReference type="ChEBI" id="CHEBI:83071"/>
        <dbReference type="ChEBI" id="CHEBI:195187"/>
    </reaction>
    <physiologicalReaction direction="left-to-right" evidence="1">
        <dbReference type="Rhea" id="RHEA:76236"/>
    </physiologicalReaction>
</comment>
<comment type="cofactor">
    <cofactor evidence="1">
        <name>Mg(2+)</name>
        <dbReference type="ChEBI" id="CHEBI:18420"/>
    </cofactor>
</comment>
<comment type="subunit">
    <text evidence="1">Homodimer.</text>
</comment>
<comment type="miscellaneous">
    <text evidence="1">A single active site specifically recognizes both ATP and CTP and is responsible for their addition.</text>
</comment>
<comment type="similarity">
    <text evidence="1">Belongs to the tRNA nucleotidyltransferase/poly(A) polymerase family. Bacterial CCA-adding enzyme type 3 subfamily.</text>
</comment>
<name>CCA_BACCQ</name>
<reference key="1">
    <citation type="journal article" date="2009" name="J. Bacteriol.">
        <title>Complete genome sequence of the extremophilic Bacillus cereus strain Q1 with industrial applications.</title>
        <authorList>
            <person name="Xiong Z."/>
            <person name="Jiang Y."/>
            <person name="Qi D."/>
            <person name="Lu H."/>
            <person name="Yang F."/>
            <person name="Yang J."/>
            <person name="Chen L."/>
            <person name="Sun L."/>
            <person name="Xu X."/>
            <person name="Xue Y."/>
            <person name="Zhu Y."/>
            <person name="Jin Q."/>
        </authorList>
    </citation>
    <scope>NUCLEOTIDE SEQUENCE [LARGE SCALE GENOMIC DNA]</scope>
    <source>
        <strain>Q1</strain>
    </source>
</reference>
<accession>B9IVQ9</accession>
<feature type="chain" id="PRO_1000165132" description="CCA-adding enzyme">
    <location>
        <begin position="1"/>
        <end position="397"/>
    </location>
</feature>
<feature type="binding site" evidence="1">
    <location>
        <position position="26"/>
    </location>
    <ligand>
        <name>ATP</name>
        <dbReference type="ChEBI" id="CHEBI:30616"/>
    </ligand>
</feature>
<feature type="binding site" evidence="1">
    <location>
        <position position="26"/>
    </location>
    <ligand>
        <name>CTP</name>
        <dbReference type="ChEBI" id="CHEBI:37563"/>
    </ligand>
</feature>
<feature type="binding site" evidence="1">
    <location>
        <position position="29"/>
    </location>
    <ligand>
        <name>ATP</name>
        <dbReference type="ChEBI" id="CHEBI:30616"/>
    </ligand>
</feature>
<feature type="binding site" evidence="1">
    <location>
        <position position="29"/>
    </location>
    <ligand>
        <name>CTP</name>
        <dbReference type="ChEBI" id="CHEBI:37563"/>
    </ligand>
</feature>
<feature type="binding site" evidence="1">
    <location>
        <position position="39"/>
    </location>
    <ligand>
        <name>Mg(2+)</name>
        <dbReference type="ChEBI" id="CHEBI:18420"/>
    </ligand>
</feature>
<feature type="binding site" evidence="1">
    <location>
        <position position="41"/>
    </location>
    <ligand>
        <name>Mg(2+)</name>
        <dbReference type="ChEBI" id="CHEBI:18420"/>
    </ligand>
</feature>
<feature type="binding site" evidence="1">
    <location>
        <position position="110"/>
    </location>
    <ligand>
        <name>ATP</name>
        <dbReference type="ChEBI" id="CHEBI:30616"/>
    </ligand>
</feature>
<feature type="binding site" evidence="1">
    <location>
        <position position="110"/>
    </location>
    <ligand>
        <name>CTP</name>
        <dbReference type="ChEBI" id="CHEBI:37563"/>
    </ligand>
</feature>
<feature type="binding site" evidence="1">
    <location>
        <position position="153"/>
    </location>
    <ligand>
        <name>ATP</name>
        <dbReference type="ChEBI" id="CHEBI:30616"/>
    </ligand>
</feature>
<feature type="binding site" evidence="1">
    <location>
        <position position="153"/>
    </location>
    <ligand>
        <name>CTP</name>
        <dbReference type="ChEBI" id="CHEBI:37563"/>
    </ligand>
</feature>
<feature type="binding site" evidence="1">
    <location>
        <position position="156"/>
    </location>
    <ligand>
        <name>ATP</name>
        <dbReference type="ChEBI" id="CHEBI:30616"/>
    </ligand>
</feature>
<feature type="binding site" evidence="1">
    <location>
        <position position="156"/>
    </location>
    <ligand>
        <name>CTP</name>
        <dbReference type="ChEBI" id="CHEBI:37563"/>
    </ligand>
</feature>
<feature type="binding site" evidence="1">
    <location>
        <position position="159"/>
    </location>
    <ligand>
        <name>ATP</name>
        <dbReference type="ChEBI" id="CHEBI:30616"/>
    </ligand>
</feature>
<feature type="binding site" evidence="1">
    <location>
        <position position="159"/>
    </location>
    <ligand>
        <name>CTP</name>
        <dbReference type="ChEBI" id="CHEBI:37563"/>
    </ligand>
</feature>
<feature type="binding site" evidence="1">
    <location>
        <position position="162"/>
    </location>
    <ligand>
        <name>ATP</name>
        <dbReference type="ChEBI" id="CHEBI:30616"/>
    </ligand>
</feature>
<feature type="binding site" evidence="1">
    <location>
        <position position="162"/>
    </location>
    <ligand>
        <name>CTP</name>
        <dbReference type="ChEBI" id="CHEBI:37563"/>
    </ligand>
</feature>
<gene>
    <name evidence="1" type="primary">cca</name>
    <name type="ordered locus">BCQ_1606</name>
</gene>
<dbReference type="EC" id="2.7.7.72" evidence="1"/>
<dbReference type="EMBL" id="CP000227">
    <property type="protein sequence ID" value="ACM12034.1"/>
    <property type="molecule type" value="Genomic_DNA"/>
</dbReference>
<dbReference type="SMR" id="B9IVQ9"/>
<dbReference type="KEGG" id="bcq:BCQ_1606"/>
<dbReference type="HOGENOM" id="CLU_015961_3_0_9"/>
<dbReference type="Proteomes" id="UP000000441">
    <property type="component" value="Chromosome"/>
</dbReference>
<dbReference type="GO" id="GO:0005524">
    <property type="term" value="F:ATP binding"/>
    <property type="evidence" value="ECO:0007669"/>
    <property type="project" value="UniProtKB-UniRule"/>
</dbReference>
<dbReference type="GO" id="GO:0004810">
    <property type="term" value="F:CCA tRNA nucleotidyltransferase activity"/>
    <property type="evidence" value="ECO:0007669"/>
    <property type="project" value="UniProtKB-UniRule"/>
</dbReference>
<dbReference type="GO" id="GO:0000287">
    <property type="term" value="F:magnesium ion binding"/>
    <property type="evidence" value="ECO:0007669"/>
    <property type="project" value="UniProtKB-UniRule"/>
</dbReference>
<dbReference type="GO" id="GO:0000049">
    <property type="term" value="F:tRNA binding"/>
    <property type="evidence" value="ECO:0007669"/>
    <property type="project" value="UniProtKB-UniRule"/>
</dbReference>
<dbReference type="GO" id="GO:0042245">
    <property type="term" value="P:RNA repair"/>
    <property type="evidence" value="ECO:0007669"/>
    <property type="project" value="UniProtKB-KW"/>
</dbReference>
<dbReference type="GO" id="GO:0001680">
    <property type="term" value="P:tRNA 3'-terminal CCA addition"/>
    <property type="evidence" value="ECO:0007669"/>
    <property type="project" value="UniProtKB-UniRule"/>
</dbReference>
<dbReference type="CDD" id="cd05398">
    <property type="entry name" value="NT_ClassII-CCAase"/>
    <property type="match status" value="1"/>
</dbReference>
<dbReference type="Gene3D" id="1.10.110.30">
    <property type="match status" value="1"/>
</dbReference>
<dbReference type="Gene3D" id="1.10.246.80">
    <property type="match status" value="1"/>
</dbReference>
<dbReference type="Gene3D" id="1.20.58.560">
    <property type="match status" value="1"/>
</dbReference>
<dbReference type="Gene3D" id="3.30.460.10">
    <property type="entry name" value="Beta Polymerase, domain 2"/>
    <property type="match status" value="1"/>
</dbReference>
<dbReference type="HAMAP" id="MF_01263">
    <property type="entry name" value="CCA_bact_type3"/>
    <property type="match status" value="1"/>
</dbReference>
<dbReference type="InterPro" id="IPR050264">
    <property type="entry name" value="Bact_CCA-adding_enz_type3_sf"/>
</dbReference>
<dbReference type="InterPro" id="IPR032810">
    <property type="entry name" value="CCA-adding_enz_C"/>
</dbReference>
<dbReference type="InterPro" id="IPR023068">
    <property type="entry name" value="CCA-adding_enz_firmicutes"/>
</dbReference>
<dbReference type="InterPro" id="IPR043519">
    <property type="entry name" value="NT_sf"/>
</dbReference>
<dbReference type="InterPro" id="IPR002646">
    <property type="entry name" value="PolA_pol_head_dom"/>
</dbReference>
<dbReference type="InterPro" id="IPR032828">
    <property type="entry name" value="PolyA_RNA-bd"/>
</dbReference>
<dbReference type="NCBIfam" id="NF009814">
    <property type="entry name" value="PRK13299.1"/>
    <property type="match status" value="1"/>
</dbReference>
<dbReference type="PANTHER" id="PTHR46173">
    <property type="entry name" value="CCA TRNA NUCLEOTIDYLTRANSFERASE 1, MITOCHONDRIAL"/>
    <property type="match status" value="1"/>
</dbReference>
<dbReference type="PANTHER" id="PTHR46173:SF1">
    <property type="entry name" value="CCA TRNA NUCLEOTIDYLTRANSFERASE 1, MITOCHONDRIAL"/>
    <property type="match status" value="1"/>
</dbReference>
<dbReference type="Pfam" id="PF01743">
    <property type="entry name" value="PolyA_pol"/>
    <property type="match status" value="1"/>
</dbReference>
<dbReference type="Pfam" id="PF12627">
    <property type="entry name" value="PolyA_pol_RNAbd"/>
    <property type="match status" value="1"/>
</dbReference>
<dbReference type="Pfam" id="PF13735">
    <property type="entry name" value="tRNA_NucTran2_2"/>
    <property type="match status" value="1"/>
</dbReference>
<dbReference type="SUPFAM" id="SSF81301">
    <property type="entry name" value="Nucleotidyltransferase"/>
    <property type="match status" value="1"/>
</dbReference>
<dbReference type="SUPFAM" id="SSF81891">
    <property type="entry name" value="Poly A polymerase C-terminal region-like"/>
    <property type="match status" value="1"/>
</dbReference>